<reference key="1">
    <citation type="journal article" date="1996" name="J. Mol. Neurosci.">
        <title>Comparative structure of human neuronal alpha 2-alpha 7 and beta 2-beta 4 nicotinic acetylcholine receptor subunits and functional expression of the alpha 2, alpha 3, alpha 4, alpha 7, beta 2, and beta 4 subunits.</title>
        <authorList>
            <person name="Elliott K.J."/>
            <person name="Ellis S.B."/>
            <person name="Berckhan K.J."/>
            <person name="Urrutia A."/>
            <person name="Chavez-Noriega L.E."/>
            <person name="Johnson E.C."/>
            <person name="Velicelebi G."/>
            <person name="Harpold M.M."/>
        </authorList>
    </citation>
    <scope>NUCLEOTIDE SEQUENCE [MRNA]</scope>
    <source>
        <tissue>Substantia nigra</tissue>
    </source>
</reference>
<reference key="2">
    <citation type="journal article" date="1997" name="FEBS Lett.">
        <title>Cloning and sequence of full-length cDNAs encoding the human neuronal nicotinic acetylcholine receptor (nAChR) subunits beta3 and beta4 and expression of seven nAChR subunits in the human neuroblastoma cell line SH-SY5Y and/or IMR-32.</title>
        <authorList>
            <person name="Groot Kormelink P.J."/>
            <person name="Luyten W.H.M.L."/>
        </authorList>
    </citation>
    <scope>NUCLEOTIDE SEQUENCE [MRNA]</scope>
    <source>
        <tissue>Pons</tissue>
    </source>
</reference>
<reference key="3">
    <citation type="submission" date="1999-04" db="EMBL/GenBank/DDBJ databases">
        <title>Genomic structure and mutation analysis of the CHRNB3 gene.</title>
        <authorList>
            <person name="Keddache M."/>
            <person name="Durner M."/>
            <person name="Greenberg D.A."/>
        </authorList>
    </citation>
    <scope>NUCLEOTIDE SEQUENCE [GENOMIC DNA]</scope>
</reference>
<reference key="4">
    <citation type="journal article" date="2004" name="Genome Res.">
        <title>The status, quality, and expansion of the NIH full-length cDNA project: the Mammalian Gene Collection (MGC).</title>
        <authorList>
            <consortium name="The MGC Project Team"/>
        </authorList>
    </citation>
    <scope>NUCLEOTIDE SEQUENCE [LARGE SCALE MRNA]</scope>
</reference>
<reference key="5">
    <citation type="journal article" date="1993" name="Neurosci. Lett.">
        <title>Molecular cloning of a human neuronal nicotinic acetylcholine receptor beta 3-like subunit.</title>
        <authorList>
            <person name="Willoughby J.J."/>
            <person name="Ninkina N.N."/>
            <person name="Beech M.M."/>
            <person name="Latchman D.S."/>
            <person name="Wood J.N."/>
        </authorList>
    </citation>
    <scope>NUCLEOTIDE SEQUENCE [MRNA] OF 36-458</scope>
    <source>
        <tissue>Brain stem</tissue>
    </source>
</reference>
<reference key="6">
    <citation type="journal article" date="2000" name="J. Physiol. (Lond.)">
        <title>Stoichiometry of human recombinant neuronal nicotinic receptors containing the b3 subunit expressed in Xenopus oocytes.</title>
        <authorList>
            <person name="Boorman J.P."/>
            <person name="Groot-Kormelink P.J."/>
            <person name="Sivilotti L.G."/>
        </authorList>
    </citation>
    <scope>FUNCTION</scope>
    <scope>SUBUNIT</scope>
    <scope>STOICHIOMETRY</scope>
    <scope>MUTAGENESIS OF VAL-273</scope>
    <scope>ACTIVITY REGULATION</scope>
</reference>
<reference key="7">
    <citation type="journal article" date="2006" name="Mol. Pharmacol.">
        <title>Beta3 subunits promote expression and nicotine-induced up-regulation of human nicotinic alpha6* nicotinic acetylcholine receptors expressed in transfected cell lines.</title>
        <authorList>
            <person name="Tumkosit P."/>
            <person name="Kuryatov A."/>
            <person name="Luo J."/>
            <person name="Lindstrom J."/>
        </authorList>
    </citation>
    <scope>FUNCTION</scope>
    <scope>SUBUNIT</scope>
    <scope>ACTIVITY REGULATION</scope>
</reference>
<reference evidence="9" key="8">
    <citation type="journal article" date="2022" name="Molecules">
        <title>Structural Insights into the Role of beta3 nAChR Subunit in the Activation of Nicotinic Receptors.</title>
        <authorList>
            <person name="Giastas P."/>
            <person name="Papakyriakou A."/>
            <person name="Tsafaras G."/>
            <person name="Tzartos S.J."/>
            <person name="Zouridakis M."/>
        </authorList>
    </citation>
    <scope>X-RAY CRYSTALLOGRAPHY (2.40 ANGSTROMS) OF 25-231</scope>
    <scope>GLYCOSYLATION AT ASN-138 AND ASN-166</scope>
    <scope>FUNCTION</scope>
</reference>
<organism>
    <name type="scientific">Homo sapiens</name>
    <name type="common">Human</name>
    <dbReference type="NCBI Taxonomy" id="9606"/>
    <lineage>
        <taxon>Eukaryota</taxon>
        <taxon>Metazoa</taxon>
        <taxon>Chordata</taxon>
        <taxon>Craniata</taxon>
        <taxon>Vertebrata</taxon>
        <taxon>Euteleostomi</taxon>
        <taxon>Mammalia</taxon>
        <taxon>Eutheria</taxon>
        <taxon>Euarchontoglires</taxon>
        <taxon>Primates</taxon>
        <taxon>Haplorrhini</taxon>
        <taxon>Catarrhini</taxon>
        <taxon>Hominidae</taxon>
        <taxon>Homo</taxon>
    </lineage>
</organism>
<proteinExistence type="evidence at protein level"/>
<dbReference type="EMBL" id="U62438">
    <property type="protein sequence ID" value="AAB40116.1"/>
    <property type="molecule type" value="mRNA"/>
</dbReference>
<dbReference type="EMBL" id="Y08417">
    <property type="protein sequence ID" value="CAA69694.1"/>
    <property type="molecule type" value="mRNA"/>
</dbReference>
<dbReference type="EMBL" id="AF140765">
    <property type="protein sequence ID" value="AAD33063.1"/>
    <property type="molecule type" value="Genomic_DNA"/>
</dbReference>
<dbReference type="EMBL" id="AF140760">
    <property type="protein sequence ID" value="AAD33063.1"/>
    <property type="status" value="JOINED"/>
    <property type="molecule type" value="Genomic_DNA"/>
</dbReference>
<dbReference type="EMBL" id="AF140761">
    <property type="protein sequence ID" value="AAD33063.1"/>
    <property type="status" value="JOINED"/>
    <property type="molecule type" value="Genomic_DNA"/>
</dbReference>
<dbReference type="EMBL" id="AF140762">
    <property type="protein sequence ID" value="AAD33063.1"/>
    <property type="status" value="JOINED"/>
    <property type="molecule type" value="Genomic_DNA"/>
</dbReference>
<dbReference type="EMBL" id="AF140763">
    <property type="protein sequence ID" value="AAD33063.1"/>
    <property type="status" value="JOINED"/>
    <property type="molecule type" value="Genomic_DNA"/>
</dbReference>
<dbReference type="EMBL" id="AF140764">
    <property type="protein sequence ID" value="AAD33063.1"/>
    <property type="status" value="JOINED"/>
    <property type="molecule type" value="Genomic_DNA"/>
</dbReference>
<dbReference type="EMBL" id="BC069681">
    <property type="protein sequence ID" value="AAH69681.1"/>
    <property type="molecule type" value="mRNA"/>
</dbReference>
<dbReference type="EMBL" id="BC069703">
    <property type="protein sequence ID" value="AAH69703.1"/>
    <property type="molecule type" value="mRNA"/>
</dbReference>
<dbReference type="EMBL" id="BC069788">
    <property type="protein sequence ID" value="AAH69788.1"/>
    <property type="molecule type" value="mRNA"/>
</dbReference>
<dbReference type="EMBL" id="X67513">
    <property type="protein sequence ID" value="CAA47851.1"/>
    <property type="molecule type" value="mRNA"/>
</dbReference>
<dbReference type="CCDS" id="CCDS6134.1"/>
<dbReference type="PIR" id="I38056">
    <property type="entry name" value="I38056"/>
</dbReference>
<dbReference type="RefSeq" id="NP_000740.1">
    <property type="nucleotide sequence ID" value="NM_000749.5"/>
</dbReference>
<dbReference type="PDB" id="8A5U">
    <property type="method" value="X-ray"/>
    <property type="resolution" value="2.40 A"/>
    <property type="chains" value="B=25-231"/>
</dbReference>
<dbReference type="PDBsum" id="8A5U"/>
<dbReference type="SMR" id="Q05901"/>
<dbReference type="BioGRID" id="107564">
    <property type="interactions" value="8"/>
</dbReference>
<dbReference type="ComplexPortal" id="CPX-2192">
    <property type="entry name" value="Neuronal nicotinic acetylcholine receptor complex, alpha3-alpha6-beta2-beta3"/>
</dbReference>
<dbReference type="FunCoup" id="Q05901">
    <property type="interactions" value="383"/>
</dbReference>
<dbReference type="IntAct" id="Q05901">
    <property type="interactions" value="5"/>
</dbReference>
<dbReference type="STRING" id="9606.ENSP00000289957"/>
<dbReference type="BindingDB" id="Q05901"/>
<dbReference type="ChEMBL" id="CHEMBL2109233"/>
<dbReference type="DrugBank" id="DB00237">
    <property type="generic name" value="Butabarbital"/>
</dbReference>
<dbReference type="DrugBank" id="DB00565">
    <property type="generic name" value="Cisatracurium"/>
</dbReference>
<dbReference type="DrugBank" id="DB00898">
    <property type="generic name" value="Ethanol"/>
</dbReference>
<dbReference type="DrugBank" id="DB00184">
    <property type="generic name" value="Nicotine"/>
</dbReference>
<dbReference type="DrugBank" id="DB00202">
    <property type="generic name" value="Succinylcholine"/>
</dbReference>
<dbReference type="DrugCentral" id="Q05901"/>
<dbReference type="GlyCosmos" id="Q05901">
    <property type="glycosylation" value="3 sites, No reported glycans"/>
</dbReference>
<dbReference type="GlyGen" id="Q05901">
    <property type="glycosylation" value="3 sites"/>
</dbReference>
<dbReference type="PhosphoSitePlus" id="Q05901"/>
<dbReference type="BioMuta" id="CHRNB3"/>
<dbReference type="DMDM" id="2506128"/>
<dbReference type="MassIVE" id="Q05901"/>
<dbReference type="PaxDb" id="9606-ENSP00000289957"/>
<dbReference type="PeptideAtlas" id="Q05901"/>
<dbReference type="ProteomicsDB" id="58355"/>
<dbReference type="Antibodypedia" id="11480">
    <property type="antibodies" value="170 antibodies from 32 providers"/>
</dbReference>
<dbReference type="DNASU" id="1142"/>
<dbReference type="Ensembl" id="ENST00000289957.3">
    <property type="protein sequence ID" value="ENSP00000289957.2"/>
    <property type="gene ID" value="ENSG00000147432.7"/>
</dbReference>
<dbReference type="GeneID" id="1142"/>
<dbReference type="KEGG" id="hsa:1142"/>
<dbReference type="MANE-Select" id="ENST00000289957.3">
    <property type="protein sequence ID" value="ENSP00000289957.2"/>
    <property type="RefSeq nucleotide sequence ID" value="NM_000749.5"/>
    <property type="RefSeq protein sequence ID" value="NP_000740.1"/>
</dbReference>
<dbReference type="UCSC" id="uc003xpi.2">
    <property type="organism name" value="human"/>
</dbReference>
<dbReference type="AGR" id="HGNC:1963"/>
<dbReference type="CTD" id="1142"/>
<dbReference type="DisGeNET" id="1142"/>
<dbReference type="GeneCards" id="CHRNB3"/>
<dbReference type="HGNC" id="HGNC:1963">
    <property type="gene designation" value="CHRNB3"/>
</dbReference>
<dbReference type="HPA" id="ENSG00000147432">
    <property type="expression patterns" value="Group enriched (brain, pancreas, retina, testis)"/>
</dbReference>
<dbReference type="MIM" id="118508">
    <property type="type" value="gene"/>
</dbReference>
<dbReference type="neXtProt" id="NX_Q05901"/>
<dbReference type="OpenTargets" id="ENSG00000147432"/>
<dbReference type="PharmGKB" id="PA26495"/>
<dbReference type="VEuPathDB" id="HostDB:ENSG00000147432"/>
<dbReference type="eggNOG" id="KOG3645">
    <property type="taxonomic scope" value="Eukaryota"/>
</dbReference>
<dbReference type="GeneTree" id="ENSGT00940000156892"/>
<dbReference type="HOGENOM" id="CLU_018074_1_0_1"/>
<dbReference type="InParanoid" id="Q05901"/>
<dbReference type="OMA" id="QMWASIV"/>
<dbReference type="OrthoDB" id="5975154at2759"/>
<dbReference type="PAN-GO" id="Q05901">
    <property type="GO annotations" value="11 GO annotations based on evolutionary models"/>
</dbReference>
<dbReference type="PhylomeDB" id="Q05901"/>
<dbReference type="TreeFam" id="TF315605"/>
<dbReference type="PathwayCommons" id="Q05901"/>
<dbReference type="Reactome" id="R-HSA-629594">
    <property type="pathway name" value="Highly calcium permeable postsynaptic nicotinic acetylcholine receptors"/>
</dbReference>
<dbReference type="Reactome" id="R-HSA-629597">
    <property type="pathway name" value="Highly calcium permeable nicotinic acetylcholine receptors"/>
</dbReference>
<dbReference type="SignaLink" id="Q05901"/>
<dbReference type="SIGNOR" id="Q05901"/>
<dbReference type="BioGRID-ORCS" id="1142">
    <property type="hits" value="6 hits in 1152 CRISPR screens"/>
</dbReference>
<dbReference type="ChiTaRS" id="CHRNB3">
    <property type="organism name" value="human"/>
</dbReference>
<dbReference type="GeneWiki" id="CHRNB3"/>
<dbReference type="GenomeRNAi" id="1142"/>
<dbReference type="Pharos" id="Q05901">
    <property type="development level" value="Tchem"/>
</dbReference>
<dbReference type="PRO" id="PR:Q05901"/>
<dbReference type="Proteomes" id="UP000005640">
    <property type="component" value="Chromosome 8"/>
</dbReference>
<dbReference type="RNAct" id="Q05901">
    <property type="molecule type" value="protein"/>
</dbReference>
<dbReference type="Bgee" id="ENSG00000147432">
    <property type="expression patterns" value="Expressed in male germ line stem cell (sensu Vertebrata) in testis and 59 other cell types or tissues"/>
</dbReference>
<dbReference type="ExpressionAtlas" id="Q05901">
    <property type="expression patterns" value="baseline and differential"/>
</dbReference>
<dbReference type="GO" id="GO:0005892">
    <property type="term" value="C:acetylcholine-gated channel complex"/>
    <property type="evidence" value="ECO:0000314"/>
    <property type="project" value="UniProt"/>
</dbReference>
<dbReference type="GO" id="GO:0034703">
    <property type="term" value="C:cation channel complex"/>
    <property type="evidence" value="ECO:0000314"/>
    <property type="project" value="UniProt"/>
</dbReference>
<dbReference type="GO" id="GO:0098691">
    <property type="term" value="C:dopaminergic synapse"/>
    <property type="evidence" value="ECO:0007669"/>
    <property type="project" value="Ensembl"/>
</dbReference>
<dbReference type="GO" id="GO:0016020">
    <property type="term" value="C:membrane"/>
    <property type="evidence" value="ECO:0000303"/>
    <property type="project" value="UniProtKB"/>
</dbReference>
<dbReference type="GO" id="GO:0043005">
    <property type="term" value="C:neuron projection"/>
    <property type="evidence" value="ECO:0000318"/>
    <property type="project" value="GO_Central"/>
</dbReference>
<dbReference type="GO" id="GO:0098878">
    <property type="term" value="C:neurotransmitter receptor complex"/>
    <property type="evidence" value="ECO:0000314"/>
    <property type="project" value="UniProt"/>
</dbReference>
<dbReference type="GO" id="GO:0005886">
    <property type="term" value="C:plasma membrane"/>
    <property type="evidence" value="ECO:0000318"/>
    <property type="project" value="GO_Central"/>
</dbReference>
<dbReference type="GO" id="GO:0045211">
    <property type="term" value="C:postsynaptic membrane"/>
    <property type="evidence" value="ECO:0007669"/>
    <property type="project" value="UniProtKB-KW"/>
</dbReference>
<dbReference type="GO" id="GO:0098793">
    <property type="term" value="C:presynapse"/>
    <property type="evidence" value="ECO:0007669"/>
    <property type="project" value="GOC"/>
</dbReference>
<dbReference type="GO" id="GO:0045202">
    <property type="term" value="C:synapse"/>
    <property type="evidence" value="ECO:0000318"/>
    <property type="project" value="GO_Central"/>
</dbReference>
<dbReference type="GO" id="GO:0042166">
    <property type="term" value="F:acetylcholine binding"/>
    <property type="evidence" value="ECO:0007669"/>
    <property type="project" value="Ensembl"/>
</dbReference>
<dbReference type="GO" id="GO:0022848">
    <property type="term" value="F:acetylcholine-gated monoatomic cation-selective channel activity"/>
    <property type="evidence" value="ECO:0000318"/>
    <property type="project" value="GO_Central"/>
</dbReference>
<dbReference type="GO" id="GO:0015267">
    <property type="term" value="F:channel activity"/>
    <property type="evidence" value="ECO:0000304"/>
    <property type="project" value="ProtInc"/>
</dbReference>
<dbReference type="GO" id="GO:1901363">
    <property type="term" value="F:heterocyclic compound binding"/>
    <property type="evidence" value="ECO:0007669"/>
    <property type="project" value="Ensembl"/>
</dbReference>
<dbReference type="GO" id="GO:0004888">
    <property type="term" value="F:transmembrane signaling receptor activity"/>
    <property type="evidence" value="ECO:0007669"/>
    <property type="project" value="InterPro"/>
</dbReference>
<dbReference type="GO" id="GO:0095500">
    <property type="term" value="P:acetylcholine receptor signaling pathway"/>
    <property type="evidence" value="ECO:0000318"/>
    <property type="project" value="GO_Central"/>
</dbReference>
<dbReference type="GO" id="GO:0051899">
    <property type="term" value="P:membrane depolarization"/>
    <property type="evidence" value="ECO:0000318"/>
    <property type="project" value="GO_Central"/>
</dbReference>
<dbReference type="GO" id="GO:0034220">
    <property type="term" value="P:monoatomic ion transmembrane transport"/>
    <property type="evidence" value="ECO:0000318"/>
    <property type="project" value="GO_Central"/>
</dbReference>
<dbReference type="GO" id="GO:0007274">
    <property type="term" value="P:neuromuscular synaptic transmission"/>
    <property type="evidence" value="ECO:0000318"/>
    <property type="project" value="GO_Central"/>
</dbReference>
<dbReference type="GO" id="GO:0099171">
    <property type="term" value="P:presynaptic modulation of chemical synaptic transmission"/>
    <property type="evidence" value="ECO:0007669"/>
    <property type="project" value="Ensembl"/>
</dbReference>
<dbReference type="GO" id="GO:0035094">
    <property type="term" value="P:response to nicotine"/>
    <property type="evidence" value="ECO:0000318"/>
    <property type="project" value="GO_Central"/>
</dbReference>
<dbReference type="GO" id="GO:0007165">
    <property type="term" value="P:signal transduction"/>
    <property type="evidence" value="ECO:0000304"/>
    <property type="project" value="ProtInc"/>
</dbReference>
<dbReference type="GO" id="GO:0007271">
    <property type="term" value="P:synaptic transmission, cholinergic"/>
    <property type="evidence" value="ECO:0000318"/>
    <property type="project" value="GO_Central"/>
</dbReference>
<dbReference type="CDD" id="cd19026">
    <property type="entry name" value="LGIC_ECD_nAChR_B3"/>
    <property type="match status" value="1"/>
</dbReference>
<dbReference type="CDD" id="cd19064">
    <property type="entry name" value="LGIC_TM_nAChR"/>
    <property type="match status" value="1"/>
</dbReference>
<dbReference type="FunFam" id="1.20.58.390:FF:000025">
    <property type="entry name" value="Cholinergic receptor nicotinic beta 3 subunit"/>
    <property type="match status" value="1"/>
</dbReference>
<dbReference type="FunFam" id="2.70.170.10:FF:000005">
    <property type="entry name" value="Neuronal nicotinic acetylcholine receptor alpha4 subunit"/>
    <property type="match status" value="1"/>
</dbReference>
<dbReference type="FunFam" id="1.20.58.390:FF:000001">
    <property type="entry name" value="Neuronal nicotinic acetylcholine receptor subunit 3"/>
    <property type="match status" value="1"/>
</dbReference>
<dbReference type="Gene3D" id="2.70.170.10">
    <property type="entry name" value="Neurotransmitter-gated ion-channel ligand-binding domain"/>
    <property type="match status" value="1"/>
</dbReference>
<dbReference type="Gene3D" id="1.20.58.390">
    <property type="entry name" value="Neurotransmitter-gated ion-channel transmembrane domain"/>
    <property type="match status" value="2"/>
</dbReference>
<dbReference type="InterPro" id="IPR006202">
    <property type="entry name" value="Neur_chan_lig-bd"/>
</dbReference>
<dbReference type="InterPro" id="IPR036734">
    <property type="entry name" value="Neur_chan_lig-bd_sf"/>
</dbReference>
<dbReference type="InterPro" id="IPR006201">
    <property type="entry name" value="Neur_channel"/>
</dbReference>
<dbReference type="InterPro" id="IPR036719">
    <property type="entry name" value="Neuro-gated_channel_TM_sf"/>
</dbReference>
<dbReference type="InterPro" id="IPR038050">
    <property type="entry name" value="Neuro_actylchol_rec"/>
</dbReference>
<dbReference type="InterPro" id="IPR006029">
    <property type="entry name" value="Neurotrans-gated_channel_TM"/>
</dbReference>
<dbReference type="InterPro" id="IPR018000">
    <property type="entry name" value="Neurotransmitter_ion_chnl_CS"/>
</dbReference>
<dbReference type="InterPro" id="IPR002394">
    <property type="entry name" value="Nicotinic_acetylcholine_rcpt"/>
</dbReference>
<dbReference type="NCBIfam" id="TIGR00860">
    <property type="entry name" value="LIC"/>
    <property type="match status" value="1"/>
</dbReference>
<dbReference type="PANTHER" id="PTHR18945">
    <property type="entry name" value="NEUROTRANSMITTER GATED ION CHANNEL"/>
    <property type="match status" value="1"/>
</dbReference>
<dbReference type="Pfam" id="PF02931">
    <property type="entry name" value="Neur_chan_LBD"/>
    <property type="match status" value="1"/>
</dbReference>
<dbReference type="Pfam" id="PF02932">
    <property type="entry name" value="Neur_chan_memb"/>
    <property type="match status" value="1"/>
</dbReference>
<dbReference type="PRINTS" id="PR00254">
    <property type="entry name" value="NICOTINICR"/>
</dbReference>
<dbReference type="PRINTS" id="PR00252">
    <property type="entry name" value="NRIONCHANNEL"/>
</dbReference>
<dbReference type="SUPFAM" id="SSF90112">
    <property type="entry name" value="Neurotransmitter-gated ion-channel transmembrane pore"/>
    <property type="match status" value="1"/>
</dbReference>
<dbReference type="SUPFAM" id="SSF63712">
    <property type="entry name" value="Nicotinic receptor ligand binding domain-like"/>
    <property type="match status" value="1"/>
</dbReference>
<dbReference type="PROSITE" id="PS00236">
    <property type="entry name" value="NEUROTR_ION_CHANNEL"/>
    <property type="match status" value="1"/>
</dbReference>
<accession>Q05901</accession>
<accession>Q15827</accession>
<feature type="signal peptide" evidence="3">
    <location>
        <begin position="1"/>
        <end position="21"/>
    </location>
</feature>
<feature type="chain" id="PRO_0000000383" description="Neuronal acetylcholine receptor subunit beta-3">
    <location>
        <begin position="22"/>
        <end position="458"/>
    </location>
</feature>
<feature type="topological domain" description="Extracellular" evidence="3">
    <location>
        <begin position="22"/>
        <end position="237"/>
    </location>
</feature>
<feature type="transmembrane region" description="Helical" evidence="3">
    <location>
        <begin position="238"/>
        <end position="258"/>
    </location>
</feature>
<feature type="transmembrane region" description="Helical" evidence="3">
    <location>
        <begin position="267"/>
        <end position="287"/>
    </location>
</feature>
<feature type="transmembrane region" description="Helical" evidence="3">
    <location>
        <begin position="300"/>
        <end position="320"/>
    </location>
</feature>
<feature type="topological domain" description="Cytoplasmic" evidence="3">
    <location>
        <begin position="321"/>
        <end position="428"/>
    </location>
</feature>
<feature type="transmembrane region" description="Helical" evidence="3">
    <location>
        <begin position="429"/>
        <end position="449"/>
    </location>
</feature>
<feature type="glycosylation site" description="N-linked (GlcNAc...) asparagine" evidence="3">
    <location>
        <position position="51"/>
    </location>
</feature>
<feature type="glycosylation site" description="N-linked (GlcNAc...) asparagine" evidence="6 9">
    <location>
        <position position="138"/>
    </location>
</feature>
<feature type="glycosylation site" description="N-linked (GlcNAc...) asparagine" evidence="6 9">
    <location>
        <position position="166"/>
    </location>
</feature>
<feature type="disulfide bond" evidence="6 9">
    <location>
        <begin position="153"/>
        <end position="167"/>
    </location>
</feature>
<feature type="sequence variant" id="VAR_048173" description="In dbSNP:rs35327613.">
    <original>K</original>
    <variation>E</variation>
    <location>
        <position position="451"/>
    </location>
</feature>
<feature type="mutagenesis site" description="Increases potency of agonists." evidence="4">
    <original>V</original>
    <variation>L</variation>
    <variation>T</variation>
    <location>
        <position position="273"/>
    </location>
</feature>
<feature type="sequence conflict" description="In Ref. 5; CAA47851." evidence="7" ref="5">
    <original>LFQ</original>
    <variation>EWK</variation>
    <location>
        <begin position="36"/>
        <end position="38"/>
    </location>
</feature>
<feature type="helix" evidence="10">
    <location>
        <begin position="29"/>
        <end position="36"/>
    </location>
</feature>
<feature type="strand" evidence="10">
    <location>
        <begin position="54"/>
        <end position="69"/>
    </location>
</feature>
<feature type="turn" evidence="10">
    <location>
        <begin position="70"/>
        <end position="73"/>
    </location>
</feature>
<feature type="strand" evidence="10">
    <location>
        <begin position="74"/>
        <end position="91"/>
    </location>
</feature>
<feature type="helix" evidence="10">
    <location>
        <begin position="94"/>
        <end position="97"/>
    </location>
</feature>
<feature type="strand" evidence="10">
    <location>
        <begin position="102"/>
        <end position="106"/>
    </location>
</feature>
<feature type="helix" evidence="10">
    <location>
        <begin position="107"/>
        <end position="109"/>
    </location>
</feature>
<feature type="strand" evidence="10">
    <location>
        <begin position="115"/>
        <end position="119"/>
    </location>
</feature>
<feature type="strand" evidence="10">
    <location>
        <begin position="132"/>
        <end position="136"/>
    </location>
</feature>
<feature type="strand" evidence="10">
    <location>
        <begin position="138"/>
        <end position="143"/>
    </location>
</feature>
<feature type="strand" evidence="10">
    <location>
        <begin position="146"/>
        <end position="152"/>
    </location>
</feature>
<feature type="strand" evidence="10">
    <location>
        <begin position="159"/>
        <end position="161"/>
    </location>
</feature>
<feature type="strand" evidence="10">
    <location>
        <begin position="164"/>
        <end position="175"/>
    </location>
</feature>
<feature type="turn" evidence="10">
    <location>
        <begin position="178"/>
        <end position="180"/>
    </location>
</feature>
<feature type="strand" evidence="10">
    <location>
        <begin position="181"/>
        <end position="185"/>
    </location>
</feature>
<feature type="strand" evidence="10">
    <location>
        <begin position="202"/>
        <end position="211"/>
    </location>
</feature>
<feature type="strand" evidence="10">
    <location>
        <begin position="215"/>
        <end position="218"/>
    </location>
</feature>
<feature type="strand" evidence="10">
    <location>
        <begin position="222"/>
        <end position="230"/>
    </location>
</feature>
<sequence length="458" mass="52729">MLPDFMLVLIVLGIPSSATTGFNSIAENEDALLRHLFQGYQKWVRPVLHSNDTIKVYFGLKISQLVDVDEKNQLMTTNVWLKQEWTDHKLRWNPDDYGGIHSIKVPSESLWLPDIVLFENADGRFEGSLMTKVIVKSNGTVVWTPPASYKSSCTMDVTFFPFDRQNCSMKFGSWTYDGTMVDLILINENVDRKDFFDNGEWEILNAKGMKGNRRDGVYSYPFITYSFVLRRLPLFYTLFLIIPCLGLSFLTVLVFYLPSDEGEKLSLSTSVLVSLTVFLLVIEEIIPSSSKVIPLIGEYLLFIMIFVTLSIIVTVFVINVHHRSSSTYHPMAPWVKRLFLQKLPKLLCMKDHVDRYSSPEKEESQPVVKGKVLEKKKQKQLSDGEKVLVAFLEKAADSIRYISRHVKKEHFISQVVQDWKFVAQVLDRIFLWLFLIVSVTGSVLIFTPALKMWLHSYH</sequence>
<name>ACHB3_HUMAN</name>
<keyword id="KW-0002">3D-structure</keyword>
<keyword id="KW-1003">Cell membrane</keyword>
<keyword id="KW-1015">Disulfide bond</keyword>
<keyword id="KW-0325">Glycoprotein</keyword>
<keyword id="KW-0407">Ion channel</keyword>
<keyword id="KW-0406">Ion transport</keyword>
<keyword id="KW-1071">Ligand-gated ion channel</keyword>
<keyword id="KW-0472">Membrane</keyword>
<keyword id="KW-0675">Receptor</keyword>
<keyword id="KW-1185">Reference proteome</keyword>
<keyword id="KW-0732">Signal</keyword>
<keyword id="KW-0770">Synapse</keyword>
<keyword id="KW-0812">Transmembrane</keyword>
<keyword id="KW-1133">Transmembrane helix</keyword>
<keyword id="KW-0813">Transport</keyword>
<protein>
    <recommendedName>
        <fullName>Neuronal acetylcholine receptor subunit beta-3</fullName>
    </recommendedName>
</protein>
<evidence type="ECO:0000250" key="1">
    <source>
        <dbReference type="UniProtKB" id="O70174"/>
    </source>
</evidence>
<evidence type="ECO:0000250" key="2">
    <source>
        <dbReference type="UniProtKB" id="P04758"/>
    </source>
</evidence>
<evidence type="ECO:0000255" key="3"/>
<evidence type="ECO:0000269" key="4">
    <source>
    </source>
</evidence>
<evidence type="ECO:0000269" key="5">
    <source>
    </source>
</evidence>
<evidence type="ECO:0000269" key="6">
    <source>
    </source>
</evidence>
<evidence type="ECO:0000305" key="7"/>
<evidence type="ECO:0000312" key="8">
    <source>
        <dbReference type="HGNC" id="HGNC:1963"/>
    </source>
</evidence>
<evidence type="ECO:0007744" key="9">
    <source>
        <dbReference type="PDB" id="8A5U"/>
    </source>
</evidence>
<evidence type="ECO:0007829" key="10">
    <source>
        <dbReference type="PDB" id="8A5U"/>
    </source>
</evidence>
<gene>
    <name evidence="8" type="primary">CHRNB3</name>
</gene>
<comment type="function">
    <text evidence="4 5 6">Component of neuronal acetylcholine receptors (nAChRs) that function as pentameric, ligand-gated cation channels with high calcium permeability among other activities. nAChRs are excitatory neurotrasnmitter receptors formed by a collection of nAChR subunits known to mediate synaptic transmission in the nervous system and the neuromuscular junction. Each nAchR subunit confers differential attributes to channel properties, including activation, deactivation and desensitization kinetics, pH sensitivity, cation permeability, and binding to allosteric modulators (PubMed:11118490, PubMed:16835356, PubMed:35889515). Has an accessory rather than functional role and is only able to form functional nAChRs when co-assembled with another beta subunit (PubMed:11118490, PubMed:16835356). Participates in pentameric assemblies along with CHRNA3, CHRNA4, CHRNA6, CHRNB2 and CHRNB4 (PubMed:11118490, PubMed:16835356). Modulates receptor assembly and increases receptor sensitivity to nicotine when associated with CHRNB2, CHRNA4 and/or CHRNA6 as well as CHRNA3 and CHRNB4 (PubMed:11118490, PubMed:16835356). Seems to play a role in nicotine addiction (PubMed:11118490, PubMed:16835356).</text>
</comment>
<comment type="catalytic activity">
    <reaction evidence="2">
        <text>Ca(2+)(in) = Ca(2+)(out)</text>
        <dbReference type="Rhea" id="RHEA:29671"/>
        <dbReference type="ChEBI" id="CHEBI:29108"/>
    </reaction>
</comment>
<comment type="catalytic activity">
    <reaction evidence="2">
        <text>K(+)(in) = K(+)(out)</text>
        <dbReference type="Rhea" id="RHEA:29463"/>
        <dbReference type="ChEBI" id="CHEBI:29103"/>
    </reaction>
</comment>
<comment type="catalytic activity">
    <reaction evidence="2">
        <text>Na(+)(in) = Na(+)(out)</text>
        <dbReference type="Rhea" id="RHEA:34963"/>
        <dbReference type="ChEBI" id="CHEBI:29101"/>
    </reaction>
</comment>
<comment type="activity regulation">
    <text evidence="4 5">Activated by a myriad of ligands such as acetylcholine, cytisine, nicotine, choline and epibatidine.</text>
</comment>
<comment type="subunit">
    <text evidence="4 5 6">Neuronal AChR seems to be composed of two different type of subunits: alpha and beta (PubMed:11118490, PubMed:35889515). CHRNB3/beta-3 subunit is only able to form functional nAChRs when co-assembled with another beta subunit. Participates in pentameric assemblies along with CHRNA4/alpha-4 and CHRNB2/beta-2 subunits and with CHRNA6/alpha-6 as well, forming stoichiometries such as (CHRNA3:CHRNB4)2:CHRNB3, (CHRNA4:CHRNB2)2:CHRNB3 or (CHRNA6:CHRNB2)2:CHRNB3 (PubMed:11118490, PubMed:16835356).</text>
</comment>
<comment type="subcellular location">
    <subcellularLocation>
        <location evidence="1">Synaptic cell membrane</location>
        <topology evidence="3">Multi-pass membrane protein</topology>
    </subcellularLocation>
    <subcellularLocation>
        <location evidence="1">Cell membrane</location>
        <topology evidence="3">Multi-pass membrane protein</topology>
    </subcellularLocation>
</comment>
<comment type="similarity">
    <text evidence="7">Belongs to the ligand-gated ion channel (TC 1.A.9) family. Acetylcholine receptor (TC 1.A.9.1) subfamily. Beta-3/CHRNB3 sub-subfamily.</text>
</comment>